<organism>
    <name type="scientific">Marchantia polymorpha</name>
    <name type="common">Common liverwort</name>
    <name type="synonym">Marchantia aquatica</name>
    <dbReference type="NCBI Taxonomy" id="3197"/>
    <lineage>
        <taxon>Eukaryota</taxon>
        <taxon>Viridiplantae</taxon>
        <taxon>Streptophyta</taxon>
        <taxon>Embryophyta</taxon>
        <taxon>Marchantiophyta</taxon>
        <taxon>Marchantiopsida</taxon>
        <taxon>Marchantiidae</taxon>
        <taxon>Marchantiales</taxon>
        <taxon>Marchantiaceae</taxon>
        <taxon>Marchantia</taxon>
    </lineage>
</organism>
<protein>
    <recommendedName>
        <fullName evidence="1">Translation initiation factor IF-1, chloroplastic</fullName>
    </recommendedName>
</protein>
<name>IF1C_MARPO</name>
<keyword id="KW-0150">Chloroplast</keyword>
<keyword id="KW-0396">Initiation factor</keyword>
<keyword id="KW-0934">Plastid</keyword>
<keyword id="KW-0648">Protein biosynthesis</keyword>
<keyword id="KW-0694">RNA-binding</keyword>
<keyword id="KW-0699">rRNA-binding</keyword>
<evidence type="ECO:0000255" key="1">
    <source>
        <dbReference type="HAMAP-Rule" id="MF_00075"/>
    </source>
</evidence>
<gene>
    <name evidence="1" type="primary">infA</name>
</gene>
<feature type="chain" id="PRO_0000095937" description="Translation initiation factor IF-1, chloroplastic">
    <location>
        <begin position="1"/>
        <end position="78"/>
    </location>
</feature>
<feature type="domain" description="S1-like" evidence="1">
    <location>
        <begin position="1"/>
        <end position="72"/>
    </location>
</feature>
<reference key="1">
    <citation type="journal article" date="1988" name="J. Mol. Biol.">
        <title>Structure and organization of Marchantia polymorpha chloroplast genome. III. Gene organization of the large single copy region from rbcL to trnI(CAU).</title>
        <authorList>
            <person name="Fukuzawa H."/>
            <person name="Kohchi T."/>
            <person name="Sano T."/>
            <person name="Shirai H."/>
            <person name="Umesono K."/>
            <person name="Inokuchi H."/>
            <person name="Ozeki H."/>
            <person name="Ohyama K."/>
        </authorList>
    </citation>
    <scope>NUCLEOTIDE SEQUENCE [GENOMIC DNA]</scope>
</reference>
<reference key="2">
    <citation type="journal article" date="1986" name="Nature">
        <title>Chloroplast gene organization deduced from complete sequence of liverwort Marchantia polymorpha chloroplast DNA.</title>
        <authorList>
            <person name="Ohyama K."/>
            <person name="Fukuzawa H."/>
            <person name="Kohchi T."/>
            <person name="Shirai H."/>
            <person name="Sano T."/>
            <person name="Sano S."/>
            <person name="Umesono K."/>
            <person name="Shiki Y."/>
            <person name="Takeuchi M."/>
            <person name="Chang Z."/>
            <person name="Aota S."/>
            <person name="Inokuchi H."/>
            <person name="Ozeki H."/>
        </authorList>
    </citation>
    <scope>NUCLEOTIDE SEQUENCE [LARGE SCALE GENOMIC DNA]</scope>
</reference>
<comment type="function">
    <text evidence="1">One of the essential components for the initiation of protein synthesis. Stabilizes the binding of IF-2 and IF-3 on the 30S subunit to which N-formylmethionyl-tRNA(fMet) subsequently binds. Helps modulate mRNA selection, yielding the 30S pre-initiation complex (PIC). Upon addition of the 50S ribosomal subunit IF-1, IF-2 and IF-3 are released leaving the mature 70S translation initiation complex.</text>
</comment>
<comment type="subunit">
    <text evidence="1">Component of the 30S ribosomal translation pre-initiation complex which assembles on the 30S ribosome in the order IF-2 and IF-3, IF-1 and N-formylmethionyl-tRNA(fMet); mRNA recruitment can occur at any time during PIC assembly.</text>
</comment>
<comment type="subcellular location">
    <subcellularLocation>
        <location evidence="1">Plastid</location>
        <location evidence="1">Chloroplast</location>
    </subcellularLocation>
</comment>
<comment type="similarity">
    <text evidence="1">Belongs to the IF-1 family.</text>
</comment>
<accession>P12134</accession>
<geneLocation type="chloroplast"/>
<dbReference type="EMBL" id="X04465">
    <property type="protein sequence ID" value="CAA28120.1"/>
    <property type="molecule type" value="Genomic_DNA"/>
</dbReference>
<dbReference type="PIR" id="A05008">
    <property type="entry name" value="A05008"/>
</dbReference>
<dbReference type="RefSeq" id="NP_039334.1">
    <property type="nucleotide sequence ID" value="NC_001319.1"/>
</dbReference>
<dbReference type="SMR" id="P12134"/>
<dbReference type="GeneID" id="2702567"/>
<dbReference type="GO" id="GO:0009507">
    <property type="term" value="C:chloroplast"/>
    <property type="evidence" value="ECO:0007669"/>
    <property type="project" value="UniProtKB-SubCell"/>
</dbReference>
<dbReference type="GO" id="GO:0043022">
    <property type="term" value="F:ribosome binding"/>
    <property type="evidence" value="ECO:0007669"/>
    <property type="project" value="UniProtKB-UniRule"/>
</dbReference>
<dbReference type="GO" id="GO:0019843">
    <property type="term" value="F:rRNA binding"/>
    <property type="evidence" value="ECO:0007669"/>
    <property type="project" value="UniProtKB-UniRule"/>
</dbReference>
<dbReference type="GO" id="GO:0003743">
    <property type="term" value="F:translation initiation factor activity"/>
    <property type="evidence" value="ECO:0007669"/>
    <property type="project" value="UniProtKB-UniRule"/>
</dbReference>
<dbReference type="CDD" id="cd04451">
    <property type="entry name" value="S1_IF1"/>
    <property type="match status" value="1"/>
</dbReference>
<dbReference type="FunFam" id="2.40.50.140:FF:000002">
    <property type="entry name" value="Translation initiation factor IF-1"/>
    <property type="match status" value="1"/>
</dbReference>
<dbReference type="Gene3D" id="2.40.50.140">
    <property type="entry name" value="Nucleic acid-binding proteins"/>
    <property type="match status" value="1"/>
</dbReference>
<dbReference type="HAMAP" id="MF_00075">
    <property type="entry name" value="IF_1"/>
    <property type="match status" value="1"/>
</dbReference>
<dbReference type="InterPro" id="IPR012340">
    <property type="entry name" value="NA-bd_OB-fold"/>
</dbReference>
<dbReference type="InterPro" id="IPR006196">
    <property type="entry name" value="RNA-binding_domain_S1_IF1"/>
</dbReference>
<dbReference type="InterPro" id="IPR003029">
    <property type="entry name" value="S1_domain"/>
</dbReference>
<dbReference type="InterPro" id="IPR004368">
    <property type="entry name" value="TIF_IF1"/>
</dbReference>
<dbReference type="NCBIfam" id="TIGR00008">
    <property type="entry name" value="infA"/>
    <property type="match status" value="1"/>
</dbReference>
<dbReference type="PANTHER" id="PTHR33370">
    <property type="entry name" value="TRANSLATION INITIATION FACTOR IF-1, CHLOROPLASTIC"/>
    <property type="match status" value="1"/>
</dbReference>
<dbReference type="PANTHER" id="PTHR33370:SF1">
    <property type="entry name" value="TRANSLATION INITIATION FACTOR IF-1, CHLOROPLASTIC"/>
    <property type="match status" value="1"/>
</dbReference>
<dbReference type="Pfam" id="PF01176">
    <property type="entry name" value="eIF-1a"/>
    <property type="match status" value="1"/>
</dbReference>
<dbReference type="SMART" id="SM00316">
    <property type="entry name" value="S1"/>
    <property type="match status" value="1"/>
</dbReference>
<dbReference type="SUPFAM" id="SSF50249">
    <property type="entry name" value="Nucleic acid-binding proteins"/>
    <property type="match status" value="1"/>
</dbReference>
<dbReference type="PROSITE" id="PS50832">
    <property type="entry name" value="S1_IF1_TYPE"/>
    <property type="match status" value="1"/>
</dbReference>
<proteinExistence type="inferred from homology"/>
<sequence>MEKQKLIDMEGVVIESLPNATFRVYLDNGCIVLTHISGKIRRNYIRILPGDRVKVELSPYDLTKGRITYRLRAKSSNN</sequence>